<sequence length="129" mass="14317">PGLAFSGLTPEHSALARAHPCDGEQFCQNLAPEDPQGDQLLQREELGLICESCRKIIQKLEDMVGPQPNEDTVTQAASRVCDKMKILRGVCKKIMRTFLRRISKDILTGKKPQAICVDIKICKEKTGLI</sequence>
<proteinExistence type="evidence at protein level"/>
<accession>Q29075</accession>
<dbReference type="EMBL" id="X85431">
    <property type="protein sequence ID" value="CAA59720.1"/>
    <property type="molecule type" value="mRNA"/>
</dbReference>
<dbReference type="PIR" id="S55044">
    <property type="entry name" value="S55044"/>
</dbReference>
<dbReference type="PDB" id="1NKL">
    <property type="method" value="NMR"/>
    <property type="chains" value="A=47-124"/>
</dbReference>
<dbReference type="PDBsum" id="1NKL"/>
<dbReference type="SMR" id="Q29075"/>
<dbReference type="FunCoup" id="Q29075">
    <property type="interactions" value="36"/>
</dbReference>
<dbReference type="STRING" id="9823.ENSSSCP00000068499"/>
<dbReference type="TCDB" id="1.C.35.3.1">
    <property type="family name" value="the amoebapore (amoebapore) family"/>
</dbReference>
<dbReference type="PaxDb" id="9823-ENSSSCP00000008784"/>
<dbReference type="PeptideAtlas" id="Q29075"/>
<dbReference type="eggNOG" id="ENOG502ST3Z">
    <property type="taxonomic scope" value="Eukaryota"/>
</dbReference>
<dbReference type="InParanoid" id="Q29075"/>
<dbReference type="EvolutionaryTrace" id="Q29075"/>
<dbReference type="Proteomes" id="UP000008227">
    <property type="component" value="Unplaced"/>
</dbReference>
<dbReference type="Proteomes" id="UP000314985">
    <property type="component" value="Unplaced"/>
</dbReference>
<dbReference type="Proteomes" id="UP000694570">
    <property type="component" value="Unplaced"/>
</dbReference>
<dbReference type="Proteomes" id="UP000694571">
    <property type="component" value="Unplaced"/>
</dbReference>
<dbReference type="Proteomes" id="UP000694720">
    <property type="component" value="Unplaced"/>
</dbReference>
<dbReference type="Proteomes" id="UP000694722">
    <property type="component" value="Unplaced"/>
</dbReference>
<dbReference type="Proteomes" id="UP000694723">
    <property type="component" value="Unplaced"/>
</dbReference>
<dbReference type="Proteomes" id="UP000694724">
    <property type="component" value="Unplaced"/>
</dbReference>
<dbReference type="Proteomes" id="UP000694725">
    <property type="component" value="Unplaced"/>
</dbReference>
<dbReference type="Proteomes" id="UP000694726">
    <property type="component" value="Unplaced"/>
</dbReference>
<dbReference type="Proteomes" id="UP000694727">
    <property type="component" value="Unplaced"/>
</dbReference>
<dbReference type="Proteomes" id="UP000694728">
    <property type="component" value="Unplaced"/>
</dbReference>
<dbReference type="GO" id="GO:0005576">
    <property type="term" value="C:extracellular region"/>
    <property type="evidence" value="ECO:0007669"/>
    <property type="project" value="UniProtKB-SubCell"/>
</dbReference>
<dbReference type="GO" id="GO:0061844">
    <property type="term" value="P:antimicrobial humoral immune response mediated by antimicrobial peptide"/>
    <property type="evidence" value="ECO:0000318"/>
    <property type="project" value="GO_Central"/>
</dbReference>
<dbReference type="GO" id="GO:0042742">
    <property type="term" value="P:defense response to bacterium"/>
    <property type="evidence" value="ECO:0000318"/>
    <property type="project" value="GO_Central"/>
</dbReference>
<dbReference type="GO" id="GO:0050832">
    <property type="term" value="P:defense response to fungus"/>
    <property type="evidence" value="ECO:0007669"/>
    <property type="project" value="UniProtKB-KW"/>
</dbReference>
<dbReference type="GO" id="GO:0031640">
    <property type="term" value="P:killing of cells of another organism"/>
    <property type="evidence" value="ECO:0000318"/>
    <property type="project" value="GO_Central"/>
</dbReference>
<dbReference type="GO" id="GO:0006629">
    <property type="term" value="P:lipid metabolic process"/>
    <property type="evidence" value="ECO:0007669"/>
    <property type="project" value="InterPro"/>
</dbReference>
<dbReference type="Gene3D" id="1.10.225.10">
    <property type="entry name" value="Saposin-like"/>
    <property type="match status" value="1"/>
</dbReference>
<dbReference type="InterPro" id="IPR038847">
    <property type="entry name" value="Granulysin-like"/>
</dbReference>
<dbReference type="InterPro" id="IPR007856">
    <property type="entry name" value="SapB_1"/>
</dbReference>
<dbReference type="InterPro" id="IPR008138">
    <property type="entry name" value="SapB_2"/>
</dbReference>
<dbReference type="InterPro" id="IPR011001">
    <property type="entry name" value="Saposin-like"/>
</dbReference>
<dbReference type="InterPro" id="IPR008139">
    <property type="entry name" value="SaposinB_dom"/>
</dbReference>
<dbReference type="PANTHER" id="PTHR15541:SF2">
    <property type="entry name" value="GRANULYSIN"/>
    <property type="match status" value="1"/>
</dbReference>
<dbReference type="PANTHER" id="PTHR15541">
    <property type="entry name" value="GRANULYSIN RELATED"/>
    <property type="match status" value="1"/>
</dbReference>
<dbReference type="Pfam" id="PF05184">
    <property type="entry name" value="SapB_1"/>
    <property type="match status" value="1"/>
</dbReference>
<dbReference type="Pfam" id="PF03489">
    <property type="entry name" value="SapB_2"/>
    <property type="match status" value="1"/>
</dbReference>
<dbReference type="SMART" id="SM00741">
    <property type="entry name" value="SapB"/>
    <property type="match status" value="1"/>
</dbReference>
<dbReference type="SUPFAM" id="SSF47862">
    <property type="entry name" value="Saposin"/>
    <property type="match status" value="1"/>
</dbReference>
<dbReference type="PROSITE" id="PS50015">
    <property type="entry name" value="SAP_B"/>
    <property type="match status" value="1"/>
</dbReference>
<keyword id="KW-0002">3D-structure</keyword>
<keyword id="KW-0044">Antibiotic</keyword>
<keyword id="KW-0929">Antimicrobial</keyword>
<keyword id="KW-0903">Direct protein sequencing</keyword>
<keyword id="KW-1015">Disulfide bond</keyword>
<keyword id="KW-0295">Fungicide</keyword>
<keyword id="KW-1185">Reference proteome</keyword>
<keyword id="KW-0964">Secreted</keyword>
<keyword id="KW-0732">Signal</keyword>
<reference key="1">
    <citation type="journal article" date="1995" name="EMBO J.">
        <title>NK-lysin, a novel effector peptide of cytotoxic T and NK cells. Structure and cDNA cloning of the porcine form, induction by interleukin 2, antibacterial and antitumour activity.</title>
        <authorList>
            <person name="Andersson M."/>
            <person name="Gunne H."/>
            <person name="Agerberth B."/>
            <person name="Boman A."/>
            <person name="Bergman T."/>
            <person name="Sillard R."/>
            <person name="Joernvall H."/>
            <person name="Mutt V."/>
            <person name="Olsson B."/>
            <person name="Wigzell H."/>
            <person name="Dagerlind A."/>
            <person name="Boman H.G."/>
            <person name="Gudmundsson G.H."/>
        </authorList>
    </citation>
    <scope>NUCLEOTIDE SEQUENCE [MRNA]</scope>
    <scope>PROTEIN SEQUENCE OF 47-124</scope>
    <source>
        <tissue>Bone marrow</tissue>
        <tissue>Small intestine</tissue>
    </source>
</reference>
<reference key="2">
    <citation type="journal article" date="1997" name="Nat. Struct. Biol.">
        <title>Saposin fold revealed by the NMR structure of NK-lysin.</title>
        <authorList>
            <person name="Liepinsh E."/>
            <person name="Andersson M."/>
            <person name="Ruysschaert J.-M."/>
            <person name="Otting G."/>
        </authorList>
    </citation>
    <scope>STRUCTURE BY NMR OF 47-124</scope>
</reference>
<organism>
    <name type="scientific">Sus scrofa</name>
    <name type="common">Pig</name>
    <dbReference type="NCBI Taxonomy" id="9823"/>
    <lineage>
        <taxon>Eukaryota</taxon>
        <taxon>Metazoa</taxon>
        <taxon>Chordata</taxon>
        <taxon>Craniata</taxon>
        <taxon>Vertebrata</taxon>
        <taxon>Euteleostomi</taxon>
        <taxon>Mammalia</taxon>
        <taxon>Eutheria</taxon>
        <taxon>Laurasiatheria</taxon>
        <taxon>Artiodactyla</taxon>
        <taxon>Suina</taxon>
        <taxon>Suidae</taxon>
        <taxon>Sus</taxon>
    </lineage>
</organism>
<gene>
    <name type="primary">NKL</name>
</gene>
<protein>
    <recommendedName>
        <fullName>Antimicrobial peptide NK-lysin</fullName>
        <shortName>NKL</shortName>
    </recommendedName>
</protein>
<name>NKL_PIG</name>
<comment type="function">
    <text>May be an effector molecule of cytotoxic activity. High activity against E.coli and B.megaterium, moderate against A.calcoaceticus and S.pyogenes. No activity against P.aeruginosa, S.aureus and Salmonella. Has some antifungal activity against C.albicans.</text>
</comment>
<comment type="subcellular location">
    <subcellularLocation>
        <location>Secreted</location>
    </subcellularLocation>
</comment>
<comment type="tissue specificity">
    <text>Cytotoxic T and NK cells.</text>
</comment>
<comment type="induction">
    <text>By interleukin-2.</text>
</comment>
<evidence type="ECO:0000255" key="1"/>
<evidence type="ECO:0000255" key="2">
    <source>
        <dbReference type="PROSITE-ProRule" id="PRU00415"/>
    </source>
</evidence>
<evidence type="ECO:0000269" key="3">
    <source>
    </source>
</evidence>
<evidence type="ECO:0007829" key="4">
    <source>
        <dbReference type="PDB" id="1NKL"/>
    </source>
</evidence>
<feature type="signal peptide" evidence="1">
    <location>
        <begin position="1" status="less than"/>
        <end position="6"/>
    </location>
</feature>
<feature type="propeptide" id="PRO_0000031663" evidence="3">
    <location>
        <begin position="7"/>
        <end position="46"/>
    </location>
</feature>
<feature type="peptide" id="PRO_0000031664" description="Antimicrobial peptide NK-lysin">
    <location>
        <begin position="47"/>
        <end position="124"/>
    </location>
</feature>
<feature type="propeptide" id="PRO_0000031665">
    <location>
        <begin position="125"/>
        <end position="129"/>
    </location>
</feature>
<feature type="domain" description="Saposin B-type" evidence="2">
    <location>
        <begin position="46"/>
        <end position="126"/>
    </location>
</feature>
<feature type="disulfide bond">
    <location>
        <begin position="50"/>
        <end position="122"/>
    </location>
</feature>
<feature type="disulfide bond">
    <location>
        <begin position="53"/>
        <end position="116"/>
    </location>
</feature>
<feature type="disulfide bond">
    <location>
        <begin position="81"/>
        <end position="91"/>
    </location>
</feature>
<feature type="sequence variant">
    <original>LI</original>
    <variation>YF</variation>
    <location>
        <begin position="48"/>
        <end position="49"/>
    </location>
</feature>
<feature type="sequence variant">
    <original>R</original>
    <variation>Q</variation>
    <location>
        <position position="79"/>
    </location>
</feature>
<feature type="sequence variant">
    <original>M</original>
    <variation>L</variation>
    <location>
        <position position="84"/>
    </location>
</feature>
<feature type="sequence variant">
    <original>V</original>
    <variation>L</variation>
    <location>
        <position position="90"/>
    </location>
</feature>
<feature type="sequence variant">
    <original>T</original>
    <variation>S</variation>
    <location>
        <position position="97"/>
    </location>
</feature>
<feature type="sequence variant">
    <original>K</original>
    <variation>W</variation>
    <location>
        <position position="104"/>
    </location>
</feature>
<feature type="non-terminal residue">
    <location>
        <position position="1"/>
    </location>
</feature>
<feature type="helix" evidence="4">
    <location>
        <begin position="49"/>
        <end position="64"/>
    </location>
</feature>
<feature type="helix" evidence="4">
    <location>
        <begin position="70"/>
        <end position="83"/>
    </location>
</feature>
<feature type="helix" evidence="4">
    <location>
        <begin position="88"/>
        <end position="107"/>
    </location>
</feature>
<feature type="helix" evidence="4">
    <location>
        <begin position="112"/>
        <end position="118"/>
    </location>
</feature>